<evidence type="ECO:0000255" key="1">
    <source>
        <dbReference type="HAMAP-Rule" id="MF_01202"/>
    </source>
</evidence>
<protein>
    <recommendedName>
        <fullName evidence="1">D-amino acid dehydrogenase</fullName>
        <ecNumber evidence="1">1.4.99.-</ecNumber>
    </recommendedName>
</protein>
<feature type="chain" id="PRO_1000164644" description="D-amino acid dehydrogenase">
    <location>
        <begin position="1"/>
        <end position="421"/>
    </location>
</feature>
<feature type="binding site" evidence="1">
    <location>
        <begin position="4"/>
        <end position="18"/>
    </location>
    <ligand>
        <name>FAD</name>
        <dbReference type="ChEBI" id="CHEBI:57692"/>
    </ligand>
</feature>
<proteinExistence type="inferred from homology"/>
<name>DADA_VIBCM</name>
<gene>
    <name evidence="1" type="primary">dadA</name>
    <name type="ordered locus">VCM66_0744</name>
</gene>
<organism>
    <name type="scientific">Vibrio cholerae serotype O1 (strain M66-2)</name>
    <dbReference type="NCBI Taxonomy" id="579112"/>
    <lineage>
        <taxon>Bacteria</taxon>
        <taxon>Pseudomonadati</taxon>
        <taxon>Pseudomonadota</taxon>
        <taxon>Gammaproteobacteria</taxon>
        <taxon>Vibrionales</taxon>
        <taxon>Vibrionaceae</taxon>
        <taxon>Vibrio</taxon>
    </lineage>
</organism>
<reference key="1">
    <citation type="journal article" date="2008" name="PLoS ONE">
        <title>A recalibrated molecular clock and independent origins for the cholera pandemic clones.</title>
        <authorList>
            <person name="Feng L."/>
            <person name="Reeves P.R."/>
            <person name="Lan R."/>
            <person name="Ren Y."/>
            <person name="Gao C."/>
            <person name="Zhou Z."/>
            <person name="Ren Y."/>
            <person name="Cheng J."/>
            <person name="Wang W."/>
            <person name="Wang J."/>
            <person name="Qian W."/>
            <person name="Li D."/>
            <person name="Wang L."/>
        </authorList>
    </citation>
    <scope>NUCLEOTIDE SEQUENCE [LARGE SCALE GENOMIC DNA]</scope>
    <source>
        <strain>M66-2</strain>
    </source>
</reference>
<keyword id="KW-0274">FAD</keyword>
<keyword id="KW-0285">Flavoprotein</keyword>
<keyword id="KW-0560">Oxidoreductase</keyword>
<comment type="function">
    <text evidence="1">Oxidative deamination of D-amino acids.</text>
</comment>
<comment type="catalytic activity">
    <reaction evidence="1">
        <text>a D-alpha-amino acid + A + H2O = a 2-oxocarboxylate + AH2 + NH4(+)</text>
        <dbReference type="Rhea" id="RHEA:18125"/>
        <dbReference type="ChEBI" id="CHEBI:13193"/>
        <dbReference type="ChEBI" id="CHEBI:15377"/>
        <dbReference type="ChEBI" id="CHEBI:17499"/>
        <dbReference type="ChEBI" id="CHEBI:28938"/>
        <dbReference type="ChEBI" id="CHEBI:35179"/>
        <dbReference type="ChEBI" id="CHEBI:59871"/>
    </reaction>
</comment>
<comment type="cofactor">
    <cofactor evidence="1">
        <name>FAD</name>
        <dbReference type="ChEBI" id="CHEBI:57692"/>
    </cofactor>
</comment>
<comment type="pathway">
    <text>Amino-acid degradation; D-alanine degradation; NH(3) and pyruvate from D-alanine: step 1/1.</text>
</comment>
<comment type="similarity">
    <text evidence="1">Belongs to the DadA oxidoreductase family.</text>
</comment>
<accession>C3LT39</accession>
<sequence>MMEVLVLGSGVVGLTSAWYLAQAGHDVTVVDRQPRGAEETSFANAGQISYGYSSPWAAPGIPQKALKWMLEKHAPLKIQPSLDPALLSWMGKMLLNCQLSRYQVNKSRMLAIANYSRECLKALNQTYSLDYQGRQRGTLQVFRDEKQLTAIEKDMQLLAQSGVRFELLNVAQCLTHEPGLAPVQEKLVGGLWLPDDETGDCYLFCQQLTELAKQQGVRFHFDCHIQQLVCEGKKIIGVQTDLGLLKADAYVVALGSYSTSLLKPLGIEIPVYPVKGYSLTLPIIDEKFAPQSTVMDETYKVALTRFSDRIRVAGTAELAGFDPAIPEARKATIEMVARDLFPHGGDFAKGQFWTGFRPMTPDGTPIIGATPYTNLYTNTGHGTLGWTMACGSASILADVLTHGESPLSRLGLDLFRYPKAS</sequence>
<dbReference type="EC" id="1.4.99.-" evidence="1"/>
<dbReference type="EMBL" id="CP001233">
    <property type="protein sequence ID" value="ACP05065.1"/>
    <property type="molecule type" value="Genomic_DNA"/>
</dbReference>
<dbReference type="SMR" id="C3LT39"/>
<dbReference type="KEGG" id="vcm:VCM66_0744"/>
<dbReference type="HOGENOM" id="CLU_007884_9_2_6"/>
<dbReference type="UniPathway" id="UPA00043">
    <property type="reaction ID" value="UER00498"/>
</dbReference>
<dbReference type="Proteomes" id="UP000001217">
    <property type="component" value="Chromosome I"/>
</dbReference>
<dbReference type="GO" id="GO:0005737">
    <property type="term" value="C:cytoplasm"/>
    <property type="evidence" value="ECO:0007669"/>
    <property type="project" value="TreeGrafter"/>
</dbReference>
<dbReference type="GO" id="GO:0005886">
    <property type="term" value="C:plasma membrane"/>
    <property type="evidence" value="ECO:0007669"/>
    <property type="project" value="TreeGrafter"/>
</dbReference>
<dbReference type="GO" id="GO:0008718">
    <property type="term" value="F:D-amino-acid dehydrogenase activity"/>
    <property type="evidence" value="ECO:0007669"/>
    <property type="project" value="UniProtKB-UniRule"/>
</dbReference>
<dbReference type="GO" id="GO:0055130">
    <property type="term" value="P:D-alanine catabolic process"/>
    <property type="evidence" value="ECO:0007669"/>
    <property type="project" value="UniProtKB-UniPathway"/>
</dbReference>
<dbReference type="FunFam" id="3.50.50.60:FF:000020">
    <property type="entry name" value="D-amino acid dehydrogenase"/>
    <property type="match status" value="1"/>
</dbReference>
<dbReference type="Gene3D" id="3.30.9.10">
    <property type="entry name" value="D-Amino Acid Oxidase, subunit A, domain 2"/>
    <property type="match status" value="1"/>
</dbReference>
<dbReference type="Gene3D" id="3.50.50.60">
    <property type="entry name" value="FAD/NAD(P)-binding domain"/>
    <property type="match status" value="2"/>
</dbReference>
<dbReference type="HAMAP" id="MF_01202">
    <property type="entry name" value="DadA"/>
    <property type="match status" value="1"/>
</dbReference>
<dbReference type="InterPro" id="IPR023080">
    <property type="entry name" value="DadA"/>
</dbReference>
<dbReference type="InterPro" id="IPR006076">
    <property type="entry name" value="FAD-dep_OxRdtase"/>
</dbReference>
<dbReference type="InterPro" id="IPR036188">
    <property type="entry name" value="FAD/NAD-bd_sf"/>
</dbReference>
<dbReference type="NCBIfam" id="NF001933">
    <property type="entry name" value="PRK00711.1"/>
    <property type="match status" value="1"/>
</dbReference>
<dbReference type="PANTHER" id="PTHR13847:SF280">
    <property type="entry name" value="D-AMINO ACID DEHYDROGENASE"/>
    <property type="match status" value="1"/>
</dbReference>
<dbReference type="PANTHER" id="PTHR13847">
    <property type="entry name" value="SARCOSINE DEHYDROGENASE-RELATED"/>
    <property type="match status" value="1"/>
</dbReference>
<dbReference type="Pfam" id="PF01266">
    <property type="entry name" value="DAO"/>
    <property type="match status" value="1"/>
</dbReference>
<dbReference type="SUPFAM" id="SSF54373">
    <property type="entry name" value="FAD-linked reductases, C-terminal domain"/>
    <property type="match status" value="1"/>
</dbReference>
<dbReference type="SUPFAM" id="SSF51905">
    <property type="entry name" value="FAD/NAD(P)-binding domain"/>
    <property type="match status" value="1"/>
</dbReference>